<accession>B7NM64</accession>
<evidence type="ECO:0000255" key="1">
    <source>
        <dbReference type="HAMAP-Rule" id="MF_00238"/>
    </source>
</evidence>
<sequence>MTAIAPVITIDGPSGAGKGTLCKAMAEALQWHLLDSGAIYRVLALAALHHHVDVASEDALVPLASHLDVRFVSTNGNLEVILEGEDVSGEIRTQEVANAASQVAAFPRVREALLRRQRAFRELPGLIADGRDMGTVVFPDAPVKIFLDASSEERAHRRMLQLQEKGFSVNFERLLAEIKERDDRDRNRAVAPLVPAADALVLDSTTLSIEQVIEKALQYARQKLALA</sequence>
<organism>
    <name type="scientific">Escherichia coli O7:K1 (strain IAI39 / ExPEC)</name>
    <dbReference type="NCBI Taxonomy" id="585057"/>
    <lineage>
        <taxon>Bacteria</taxon>
        <taxon>Pseudomonadati</taxon>
        <taxon>Pseudomonadota</taxon>
        <taxon>Gammaproteobacteria</taxon>
        <taxon>Enterobacterales</taxon>
        <taxon>Enterobacteriaceae</taxon>
        <taxon>Escherichia</taxon>
    </lineage>
</organism>
<feature type="chain" id="PRO_1000119014" description="Cytidylate kinase">
    <location>
        <begin position="1"/>
        <end position="227"/>
    </location>
</feature>
<feature type="binding site" evidence="1">
    <location>
        <begin position="12"/>
        <end position="20"/>
    </location>
    <ligand>
        <name>ATP</name>
        <dbReference type="ChEBI" id="CHEBI:30616"/>
    </ligand>
</feature>
<protein>
    <recommendedName>
        <fullName evidence="1">Cytidylate kinase</fullName>
        <shortName evidence="1">CK</shortName>
        <ecNumber evidence="1">2.7.4.25</ecNumber>
    </recommendedName>
    <alternativeName>
        <fullName evidence="1">Cytidine monophosphate kinase</fullName>
        <shortName evidence="1">CMP kinase</shortName>
    </alternativeName>
</protein>
<reference key="1">
    <citation type="journal article" date="2009" name="PLoS Genet.">
        <title>Organised genome dynamics in the Escherichia coli species results in highly diverse adaptive paths.</title>
        <authorList>
            <person name="Touchon M."/>
            <person name="Hoede C."/>
            <person name="Tenaillon O."/>
            <person name="Barbe V."/>
            <person name="Baeriswyl S."/>
            <person name="Bidet P."/>
            <person name="Bingen E."/>
            <person name="Bonacorsi S."/>
            <person name="Bouchier C."/>
            <person name="Bouvet O."/>
            <person name="Calteau A."/>
            <person name="Chiapello H."/>
            <person name="Clermont O."/>
            <person name="Cruveiller S."/>
            <person name="Danchin A."/>
            <person name="Diard M."/>
            <person name="Dossat C."/>
            <person name="Karoui M.E."/>
            <person name="Frapy E."/>
            <person name="Garry L."/>
            <person name="Ghigo J.M."/>
            <person name="Gilles A.M."/>
            <person name="Johnson J."/>
            <person name="Le Bouguenec C."/>
            <person name="Lescat M."/>
            <person name="Mangenot S."/>
            <person name="Martinez-Jehanne V."/>
            <person name="Matic I."/>
            <person name="Nassif X."/>
            <person name="Oztas S."/>
            <person name="Petit M.A."/>
            <person name="Pichon C."/>
            <person name="Rouy Z."/>
            <person name="Ruf C.S."/>
            <person name="Schneider D."/>
            <person name="Tourret J."/>
            <person name="Vacherie B."/>
            <person name="Vallenet D."/>
            <person name="Medigue C."/>
            <person name="Rocha E.P.C."/>
            <person name="Denamur E."/>
        </authorList>
    </citation>
    <scope>NUCLEOTIDE SEQUENCE [LARGE SCALE GENOMIC DNA]</scope>
    <source>
        <strain>IAI39 / ExPEC</strain>
    </source>
</reference>
<gene>
    <name evidence="1" type="primary">cmk</name>
    <name type="ordered locus">ECIAI39_2237</name>
</gene>
<name>KCY_ECO7I</name>
<dbReference type="EC" id="2.7.4.25" evidence="1"/>
<dbReference type="EMBL" id="CU928164">
    <property type="protein sequence ID" value="CAR18364.1"/>
    <property type="molecule type" value="Genomic_DNA"/>
</dbReference>
<dbReference type="RefSeq" id="WP_000125016.1">
    <property type="nucleotide sequence ID" value="NC_011750.1"/>
</dbReference>
<dbReference type="RefSeq" id="YP_002408200.1">
    <property type="nucleotide sequence ID" value="NC_011750.1"/>
</dbReference>
<dbReference type="SMR" id="B7NM64"/>
<dbReference type="STRING" id="585057.ECIAI39_2237"/>
<dbReference type="GeneID" id="93776507"/>
<dbReference type="KEGG" id="ect:ECIAI39_2237"/>
<dbReference type="PATRIC" id="fig|585057.6.peg.2330"/>
<dbReference type="HOGENOM" id="CLU_079959_0_2_6"/>
<dbReference type="Proteomes" id="UP000000749">
    <property type="component" value="Chromosome"/>
</dbReference>
<dbReference type="GO" id="GO:0005829">
    <property type="term" value="C:cytosol"/>
    <property type="evidence" value="ECO:0007669"/>
    <property type="project" value="TreeGrafter"/>
</dbReference>
<dbReference type="GO" id="GO:0005524">
    <property type="term" value="F:ATP binding"/>
    <property type="evidence" value="ECO:0007669"/>
    <property type="project" value="UniProtKB-UniRule"/>
</dbReference>
<dbReference type="GO" id="GO:0036430">
    <property type="term" value="F:CMP kinase activity"/>
    <property type="evidence" value="ECO:0007669"/>
    <property type="project" value="RHEA"/>
</dbReference>
<dbReference type="GO" id="GO:0036431">
    <property type="term" value="F:dCMP kinase activity"/>
    <property type="evidence" value="ECO:0007669"/>
    <property type="project" value="RHEA"/>
</dbReference>
<dbReference type="GO" id="GO:0015949">
    <property type="term" value="P:nucleobase-containing small molecule interconversion"/>
    <property type="evidence" value="ECO:0007669"/>
    <property type="project" value="TreeGrafter"/>
</dbReference>
<dbReference type="GO" id="GO:0006220">
    <property type="term" value="P:pyrimidine nucleotide metabolic process"/>
    <property type="evidence" value="ECO:0007669"/>
    <property type="project" value="UniProtKB-UniRule"/>
</dbReference>
<dbReference type="CDD" id="cd02020">
    <property type="entry name" value="CMPK"/>
    <property type="match status" value="1"/>
</dbReference>
<dbReference type="FunFam" id="3.40.50.300:FF:000262">
    <property type="entry name" value="Cytidylate kinase"/>
    <property type="match status" value="1"/>
</dbReference>
<dbReference type="Gene3D" id="3.40.50.300">
    <property type="entry name" value="P-loop containing nucleotide triphosphate hydrolases"/>
    <property type="match status" value="1"/>
</dbReference>
<dbReference type="HAMAP" id="MF_00238">
    <property type="entry name" value="Cytidyl_kinase_type1"/>
    <property type="match status" value="1"/>
</dbReference>
<dbReference type="InterPro" id="IPR003136">
    <property type="entry name" value="Cytidylate_kin"/>
</dbReference>
<dbReference type="InterPro" id="IPR011994">
    <property type="entry name" value="Cytidylate_kinase_dom"/>
</dbReference>
<dbReference type="InterPro" id="IPR027417">
    <property type="entry name" value="P-loop_NTPase"/>
</dbReference>
<dbReference type="NCBIfam" id="TIGR00017">
    <property type="entry name" value="cmk"/>
    <property type="match status" value="1"/>
</dbReference>
<dbReference type="PANTHER" id="PTHR21299:SF2">
    <property type="entry name" value="CYTIDYLATE KINASE"/>
    <property type="match status" value="1"/>
</dbReference>
<dbReference type="PANTHER" id="PTHR21299">
    <property type="entry name" value="CYTIDYLATE KINASE/PANTOATE-BETA-ALANINE LIGASE"/>
    <property type="match status" value="1"/>
</dbReference>
<dbReference type="Pfam" id="PF02224">
    <property type="entry name" value="Cytidylate_kin"/>
    <property type="match status" value="1"/>
</dbReference>
<dbReference type="SUPFAM" id="SSF52540">
    <property type="entry name" value="P-loop containing nucleoside triphosphate hydrolases"/>
    <property type="match status" value="1"/>
</dbReference>
<keyword id="KW-0067">ATP-binding</keyword>
<keyword id="KW-0963">Cytoplasm</keyword>
<keyword id="KW-0418">Kinase</keyword>
<keyword id="KW-0547">Nucleotide-binding</keyword>
<keyword id="KW-0808">Transferase</keyword>
<proteinExistence type="inferred from homology"/>
<comment type="catalytic activity">
    <reaction evidence="1">
        <text>CMP + ATP = CDP + ADP</text>
        <dbReference type="Rhea" id="RHEA:11600"/>
        <dbReference type="ChEBI" id="CHEBI:30616"/>
        <dbReference type="ChEBI" id="CHEBI:58069"/>
        <dbReference type="ChEBI" id="CHEBI:60377"/>
        <dbReference type="ChEBI" id="CHEBI:456216"/>
        <dbReference type="EC" id="2.7.4.25"/>
    </reaction>
</comment>
<comment type="catalytic activity">
    <reaction evidence="1">
        <text>dCMP + ATP = dCDP + ADP</text>
        <dbReference type="Rhea" id="RHEA:25094"/>
        <dbReference type="ChEBI" id="CHEBI:30616"/>
        <dbReference type="ChEBI" id="CHEBI:57566"/>
        <dbReference type="ChEBI" id="CHEBI:58593"/>
        <dbReference type="ChEBI" id="CHEBI:456216"/>
        <dbReference type="EC" id="2.7.4.25"/>
    </reaction>
</comment>
<comment type="subcellular location">
    <subcellularLocation>
        <location evidence="1">Cytoplasm</location>
    </subcellularLocation>
</comment>
<comment type="similarity">
    <text evidence="1">Belongs to the cytidylate kinase family. Type 1 subfamily.</text>
</comment>